<evidence type="ECO:0000255" key="1">
    <source>
        <dbReference type="HAMAP-Rule" id="MF_00059"/>
    </source>
</evidence>
<name>RPOA_PARP8</name>
<keyword id="KW-0240">DNA-directed RNA polymerase</keyword>
<keyword id="KW-0548">Nucleotidyltransferase</keyword>
<keyword id="KW-1185">Reference proteome</keyword>
<keyword id="KW-0804">Transcription</keyword>
<keyword id="KW-0808">Transferase</keyword>
<gene>
    <name evidence="1" type="primary">rpoA</name>
    <name type="ordered locus">Bphy_2813</name>
</gene>
<sequence>MQTSLLKPKIIAVESLGESHAKVVMEPFERGYGHTLGNALRRVLLSSMVGYAPTEVTIAGVVHEYSTLDGVQEDVVNLLLNLKGVVFKLHNRDEVTVTLRKEGEGVVTAGDIELAHDCEVINPDHVIAHLSKGGKLDVQIKVEKGRGYVPGNVRRYGEESAKIIGRIVLDASFSPVRRVSYAVESARVEQRTDLDKLVMNIETNGVISPEEAIRQSARILVDQLSVFAALEGTEAAAEAPSRAPQIDPILLRPVDDLELTVRSANCLKAENIYYIGDLIQRTENELLKTPNLGRKSLNEIKEVLASRGLTLGMKLENWPPAGLDK</sequence>
<feature type="chain" id="PRO_1000091929" description="DNA-directed RNA polymerase subunit alpha">
    <location>
        <begin position="1"/>
        <end position="325"/>
    </location>
</feature>
<feature type="region of interest" description="Alpha N-terminal domain (alpha-NTD)" evidence="1">
    <location>
        <begin position="1"/>
        <end position="231"/>
    </location>
</feature>
<feature type="region of interest" description="Alpha C-terminal domain (alpha-CTD)" evidence="1">
    <location>
        <begin position="246"/>
        <end position="325"/>
    </location>
</feature>
<reference key="1">
    <citation type="journal article" date="2014" name="Stand. Genomic Sci.">
        <title>Complete genome sequence of Burkholderia phymatum STM815(T), a broad host range and efficient nitrogen-fixing symbiont of Mimosa species.</title>
        <authorList>
            <person name="Moulin L."/>
            <person name="Klonowska A."/>
            <person name="Caroline B."/>
            <person name="Booth K."/>
            <person name="Vriezen J.A."/>
            <person name="Melkonian R."/>
            <person name="James E.K."/>
            <person name="Young J.P."/>
            <person name="Bena G."/>
            <person name="Hauser L."/>
            <person name="Land M."/>
            <person name="Kyrpides N."/>
            <person name="Bruce D."/>
            <person name="Chain P."/>
            <person name="Copeland A."/>
            <person name="Pitluck S."/>
            <person name="Woyke T."/>
            <person name="Lizotte-Waniewski M."/>
            <person name="Bristow J."/>
            <person name="Riley M."/>
        </authorList>
    </citation>
    <scope>NUCLEOTIDE SEQUENCE [LARGE SCALE GENOMIC DNA]</scope>
    <source>
        <strain>DSM 17167 / CIP 108236 / LMG 21445 / STM815</strain>
    </source>
</reference>
<organism>
    <name type="scientific">Paraburkholderia phymatum (strain DSM 17167 / CIP 108236 / LMG 21445 / STM815)</name>
    <name type="common">Burkholderia phymatum</name>
    <dbReference type="NCBI Taxonomy" id="391038"/>
    <lineage>
        <taxon>Bacteria</taxon>
        <taxon>Pseudomonadati</taxon>
        <taxon>Pseudomonadota</taxon>
        <taxon>Betaproteobacteria</taxon>
        <taxon>Burkholderiales</taxon>
        <taxon>Burkholderiaceae</taxon>
        <taxon>Paraburkholderia</taxon>
    </lineage>
</organism>
<comment type="function">
    <text evidence="1">DNA-dependent RNA polymerase catalyzes the transcription of DNA into RNA using the four ribonucleoside triphosphates as substrates.</text>
</comment>
<comment type="catalytic activity">
    <reaction evidence="1">
        <text>RNA(n) + a ribonucleoside 5'-triphosphate = RNA(n+1) + diphosphate</text>
        <dbReference type="Rhea" id="RHEA:21248"/>
        <dbReference type="Rhea" id="RHEA-COMP:14527"/>
        <dbReference type="Rhea" id="RHEA-COMP:17342"/>
        <dbReference type="ChEBI" id="CHEBI:33019"/>
        <dbReference type="ChEBI" id="CHEBI:61557"/>
        <dbReference type="ChEBI" id="CHEBI:140395"/>
        <dbReference type="EC" id="2.7.7.6"/>
    </reaction>
</comment>
<comment type="subunit">
    <text evidence="1">Homodimer. The RNAP catalytic core consists of 2 alpha, 1 beta, 1 beta' and 1 omega subunit. When a sigma factor is associated with the core the holoenzyme is formed, which can initiate transcription.</text>
</comment>
<comment type="domain">
    <text evidence="1">The N-terminal domain is essential for RNAP assembly and basal transcription, whereas the C-terminal domain is involved in interaction with transcriptional regulators and with upstream promoter elements.</text>
</comment>
<comment type="similarity">
    <text evidence="1">Belongs to the RNA polymerase alpha chain family.</text>
</comment>
<proteinExistence type="inferred from homology"/>
<dbReference type="EC" id="2.7.7.6" evidence="1"/>
<dbReference type="EMBL" id="CP001043">
    <property type="protein sequence ID" value="ACC71985.1"/>
    <property type="molecule type" value="Genomic_DNA"/>
</dbReference>
<dbReference type="RefSeq" id="WP_007730697.1">
    <property type="nucleotide sequence ID" value="NZ_CADFGH010000028.1"/>
</dbReference>
<dbReference type="SMR" id="B2JI39"/>
<dbReference type="STRING" id="391038.Bphy_2813"/>
<dbReference type="KEGG" id="bph:Bphy_2813"/>
<dbReference type="eggNOG" id="COG0202">
    <property type="taxonomic scope" value="Bacteria"/>
</dbReference>
<dbReference type="HOGENOM" id="CLU_053084_0_0_4"/>
<dbReference type="OrthoDB" id="9805706at2"/>
<dbReference type="Proteomes" id="UP000001192">
    <property type="component" value="Chromosome 1"/>
</dbReference>
<dbReference type="GO" id="GO:0005737">
    <property type="term" value="C:cytoplasm"/>
    <property type="evidence" value="ECO:0007669"/>
    <property type="project" value="UniProtKB-ARBA"/>
</dbReference>
<dbReference type="GO" id="GO:0000428">
    <property type="term" value="C:DNA-directed RNA polymerase complex"/>
    <property type="evidence" value="ECO:0007669"/>
    <property type="project" value="UniProtKB-KW"/>
</dbReference>
<dbReference type="GO" id="GO:0003677">
    <property type="term" value="F:DNA binding"/>
    <property type="evidence" value="ECO:0007669"/>
    <property type="project" value="UniProtKB-UniRule"/>
</dbReference>
<dbReference type="GO" id="GO:0003899">
    <property type="term" value="F:DNA-directed RNA polymerase activity"/>
    <property type="evidence" value="ECO:0007669"/>
    <property type="project" value="UniProtKB-UniRule"/>
</dbReference>
<dbReference type="GO" id="GO:0046983">
    <property type="term" value="F:protein dimerization activity"/>
    <property type="evidence" value="ECO:0007669"/>
    <property type="project" value="InterPro"/>
</dbReference>
<dbReference type="GO" id="GO:0006351">
    <property type="term" value="P:DNA-templated transcription"/>
    <property type="evidence" value="ECO:0007669"/>
    <property type="project" value="UniProtKB-UniRule"/>
</dbReference>
<dbReference type="CDD" id="cd06928">
    <property type="entry name" value="RNAP_alpha_NTD"/>
    <property type="match status" value="1"/>
</dbReference>
<dbReference type="FunFam" id="1.10.150.20:FF:000001">
    <property type="entry name" value="DNA-directed RNA polymerase subunit alpha"/>
    <property type="match status" value="1"/>
</dbReference>
<dbReference type="FunFam" id="2.170.120.12:FF:000001">
    <property type="entry name" value="DNA-directed RNA polymerase subunit alpha"/>
    <property type="match status" value="1"/>
</dbReference>
<dbReference type="Gene3D" id="1.10.150.20">
    <property type="entry name" value="5' to 3' exonuclease, C-terminal subdomain"/>
    <property type="match status" value="1"/>
</dbReference>
<dbReference type="Gene3D" id="2.170.120.12">
    <property type="entry name" value="DNA-directed RNA polymerase, insert domain"/>
    <property type="match status" value="1"/>
</dbReference>
<dbReference type="Gene3D" id="3.30.1360.10">
    <property type="entry name" value="RNA polymerase, RBP11-like subunit"/>
    <property type="match status" value="1"/>
</dbReference>
<dbReference type="HAMAP" id="MF_00059">
    <property type="entry name" value="RNApol_bact_RpoA"/>
    <property type="match status" value="1"/>
</dbReference>
<dbReference type="InterPro" id="IPR011262">
    <property type="entry name" value="DNA-dir_RNA_pol_insert"/>
</dbReference>
<dbReference type="InterPro" id="IPR011263">
    <property type="entry name" value="DNA-dir_RNA_pol_RpoA/D/Rpb3"/>
</dbReference>
<dbReference type="InterPro" id="IPR011773">
    <property type="entry name" value="DNA-dir_RpoA"/>
</dbReference>
<dbReference type="InterPro" id="IPR036603">
    <property type="entry name" value="RBP11-like"/>
</dbReference>
<dbReference type="InterPro" id="IPR011260">
    <property type="entry name" value="RNAP_asu_C"/>
</dbReference>
<dbReference type="InterPro" id="IPR036643">
    <property type="entry name" value="RNApol_insert_sf"/>
</dbReference>
<dbReference type="NCBIfam" id="NF003513">
    <property type="entry name" value="PRK05182.1-2"/>
    <property type="match status" value="1"/>
</dbReference>
<dbReference type="NCBIfam" id="NF003519">
    <property type="entry name" value="PRK05182.2-5"/>
    <property type="match status" value="1"/>
</dbReference>
<dbReference type="NCBIfam" id="TIGR02027">
    <property type="entry name" value="rpoA"/>
    <property type="match status" value="1"/>
</dbReference>
<dbReference type="Pfam" id="PF01000">
    <property type="entry name" value="RNA_pol_A_bac"/>
    <property type="match status" value="1"/>
</dbReference>
<dbReference type="Pfam" id="PF03118">
    <property type="entry name" value="RNA_pol_A_CTD"/>
    <property type="match status" value="1"/>
</dbReference>
<dbReference type="Pfam" id="PF01193">
    <property type="entry name" value="RNA_pol_L"/>
    <property type="match status" value="1"/>
</dbReference>
<dbReference type="SMART" id="SM00662">
    <property type="entry name" value="RPOLD"/>
    <property type="match status" value="1"/>
</dbReference>
<dbReference type="SUPFAM" id="SSF47789">
    <property type="entry name" value="C-terminal domain of RNA polymerase alpha subunit"/>
    <property type="match status" value="1"/>
</dbReference>
<dbReference type="SUPFAM" id="SSF56553">
    <property type="entry name" value="Insert subdomain of RNA polymerase alpha subunit"/>
    <property type="match status" value="1"/>
</dbReference>
<dbReference type="SUPFAM" id="SSF55257">
    <property type="entry name" value="RBP11-like subunits of RNA polymerase"/>
    <property type="match status" value="1"/>
</dbReference>
<accession>B2JI39</accession>
<protein>
    <recommendedName>
        <fullName evidence="1">DNA-directed RNA polymerase subunit alpha</fullName>
        <shortName evidence="1">RNAP subunit alpha</shortName>
        <ecNumber evidence="1">2.7.7.6</ecNumber>
    </recommendedName>
    <alternativeName>
        <fullName evidence="1">RNA polymerase subunit alpha</fullName>
    </alternativeName>
    <alternativeName>
        <fullName evidence="1">Transcriptase subunit alpha</fullName>
    </alternativeName>
</protein>